<comment type="function">
    <text evidence="1">Catalyzes the conversion of D-ribulose 5-phosphate to formate and 3,4-dihydroxy-2-butanone 4-phosphate.</text>
</comment>
<comment type="function">
    <text evidence="1">Catalyzes the conversion of GTP to 2,5-diamino-6-ribosylamino-4(3H)-pyrimidinone 5'-phosphate (DARP), formate and pyrophosphate.</text>
</comment>
<comment type="catalytic activity">
    <reaction evidence="1">
        <text>D-ribulose 5-phosphate = (2S)-2-hydroxy-3-oxobutyl phosphate + formate + H(+)</text>
        <dbReference type="Rhea" id="RHEA:18457"/>
        <dbReference type="ChEBI" id="CHEBI:15378"/>
        <dbReference type="ChEBI" id="CHEBI:15740"/>
        <dbReference type="ChEBI" id="CHEBI:58121"/>
        <dbReference type="ChEBI" id="CHEBI:58830"/>
        <dbReference type="EC" id="4.1.99.12"/>
    </reaction>
</comment>
<comment type="catalytic activity">
    <reaction evidence="1">
        <text>GTP + 4 H2O = 2,5-diamino-6-hydroxy-4-(5-phosphoribosylamino)-pyrimidine + formate + 2 phosphate + 3 H(+)</text>
        <dbReference type="Rhea" id="RHEA:23704"/>
        <dbReference type="ChEBI" id="CHEBI:15377"/>
        <dbReference type="ChEBI" id="CHEBI:15378"/>
        <dbReference type="ChEBI" id="CHEBI:15740"/>
        <dbReference type="ChEBI" id="CHEBI:37565"/>
        <dbReference type="ChEBI" id="CHEBI:43474"/>
        <dbReference type="ChEBI" id="CHEBI:58614"/>
        <dbReference type="EC" id="3.5.4.25"/>
    </reaction>
</comment>
<comment type="cofactor">
    <cofactor evidence="1">
        <name>Mg(2+)</name>
        <dbReference type="ChEBI" id="CHEBI:18420"/>
    </cofactor>
    <cofactor evidence="1">
        <name>Mn(2+)</name>
        <dbReference type="ChEBI" id="CHEBI:29035"/>
    </cofactor>
    <text evidence="1">Binds 2 divalent metal cations per subunit. Magnesium or manganese.</text>
</comment>
<comment type="cofactor">
    <cofactor evidence="1">
        <name>Zn(2+)</name>
        <dbReference type="ChEBI" id="CHEBI:29105"/>
    </cofactor>
    <text evidence="1">Binds 1 zinc ion per subunit.</text>
</comment>
<comment type="pathway">
    <text evidence="1">Cofactor biosynthesis; riboflavin biosynthesis; 2-hydroxy-3-oxobutyl phosphate from D-ribulose 5-phosphate: step 1/1.</text>
</comment>
<comment type="pathway">
    <text evidence="1">Cofactor biosynthesis; riboflavin biosynthesis; 5-amino-6-(D-ribitylamino)uracil from GTP: step 1/4.</text>
</comment>
<comment type="similarity">
    <text evidence="1">In the N-terminal section; belongs to the DHBP synthase family.</text>
</comment>
<comment type="similarity">
    <text evidence="1">In the C-terminal section; belongs to the GTP cyclohydrolase II family.</text>
</comment>
<proteinExistence type="inferred from homology"/>
<reference key="1">
    <citation type="submission" date="2009-04" db="EMBL/GenBank/DDBJ databases">
        <title>Genome sequence of Bacillus anthracis A0248.</title>
        <authorList>
            <person name="Dodson R.J."/>
            <person name="Munk A.C."/>
            <person name="Bruce D."/>
            <person name="Detter C."/>
            <person name="Tapia R."/>
            <person name="Sutton G."/>
            <person name="Sims D."/>
            <person name="Brettin T."/>
        </authorList>
    </citation>
    <scope>NUCLEOTIDE SEQUENCE [LARGE SCALE GENOMIC DNA]</scope>
    <source>
        <strain>A0248</strain>
    </source>
</reference>
<feature type="chain" id="PRO_1000165242" description="Riboflavin biosynthesis protein RibBA">
    <location>
        <begin position="1"/>
        <end position="397"/>
    </location>
</feature>
<feature type="region of interest" description="DHBP synthase">
    <location>
        <begin position="1"/>
        <end position="199"/>
    </location>
</feature>
<feature type="region of interest" description="GTP cyclohydrolase II">
    <location>
        <begin position="200"/>
        <end position="397"/>
    </location>
</feature>
<feature type="active site" description="Proton acceptor; for GTP cyclohydrolase activity" evidence="1">
    <location>
        <position position="327"/>
    </location>
</feature>
<feature type="active site" description="Nucleophile; for GTP cyclohydrolase activity" evidence="1">
    <location>
        <position position="329"/>
    </location>
</feature>
<feature type="binding site" evidence="1">
    <location>
        <begin position="26"/>
        <end position="27"/>
    </location>
    <ligand>
        <name>D-ribulose 5-phosphate</name>
        <dbReference type="ChEBI" id="CHEBI:58121"/>
    </ligand>
</feature>
<feature type="binding site" evidence="1">
    <location>
        <position position="27"/>
    </location>
    <ligand>
        <name>Mg(2+)</name>
        <dbReference type="ChEBI" id="CHEBI:18420"/>
        <label>1</label>
    </ligand>
</feature>
<feature type="binding site" evidence="1">
    <location>
        <position position="27"/>
    </location>
    <ligand>
        <name>Mg(2+)</name>
        <dbReference type="ChEBI" id="CHEBI:18420"/>
        <label>2</label>
    </ligand>
</feature>
<feature type="binding site" evidence="1">
    <location>
        <position position="31"/>
    </location>
    <ligand>
        <name>D-ribulose 5-phosphate</name>
        <dbReference type="ChEBI" id="CHEBI:58121"/>
    </ligand>
</feature>
<feature type="binding site" evidence="1">
    <location>
        <begin position="138"/>
        <end position="142"/>
    </location>
    <ligand>
        <name>D-ribulose 5-phosphate</name>
        <dbReference type="ChEBI" id="CHEBI:58121"/>
    </ligand>
</feature>
<feature type="binding site" evidence="1">
    <location>
        <position position="141"/>
    </location>
    <ligand>
        <name>Mg(2+)</name>
        <dbReference type="ChEBI" id="CHEBI:18420"/>
        <label>2</label>
    </ligand>
</feature>
<feature type="binding site" evidence="1">
    <location>
        <position position="162"/>
    </location>
    <ligand>
        <name>D-ribulose 5-phosphate</name>
        <dbReference type="ChEBI" id="CHEBI:58121"/>
    </ligand>
</feature>
<feature type="binding site" evidence="1">
    <location>
        <begin position="250"/>
        <end position="254"/>
    </location>
    <ligand>
        <name>GTP</name>
        <dbReference type="ChEBI" id="CHEBI:37565"/>
    </ligand>
</feature>
<feature type="binding site" evidence="1">
    <location>
        <position position="255"/>
    </location>
    <ligand>
        <name>Zn(2+)</name>
        <dbReference type="ChEBI" id="CHEBI:29105"/>
        <note>catalytic</note>
    </ligand>
</feature>
<feature type="binding site" evidence="1">
    <location>
        <position position="266"/>
    </location>
    <ligand>
        <name>Zn(2+)</name>
        <dbReference type="ChEBI" id="CHEBI:29105"/>
        <note>catalytic</note>
    </ligand>
</feature>
<feature type="binding site" evidence="1">
    <location>
        <position position="268"/>
    </location>
    <ligand>
        <name>Zn(2+)</name>
        <dbReference type="ChEBI" id="CHEBI:29105"/>
        <note>catalytic</note>
    </ligand>
</feature>
<feature type="binding site" evidence="1">
    <location>
        <position position="271"/>
    </location>
    <ligand>
        <name>GTP</name>
        <dbReference type="ChEBI" id="CHEBI:37565"/>
    </ligand>
</feature>
<feature type="binding site" evidence="1">
    <location>
        <begin position="293"/>
        <end position="295"/>
    </location>
    <ligand>
        <name>GTP</name>
        <dbReference type="ChEBI" id="CHEBI:37565"/>
    </ligand>
</feature>
<feature type="binding site" evidence="1">
    <location>
        <position position="315"/>
    </location>
    <ligand>
        <name>GTP</name>
        <dbReference type="ChEBI" id="CHEBI:37565"/>
    </ligand>
</feature>
<feature type="binding site" evidence="1">
    <location>
        <position position="350"/>
    </location>
    <ligand>
        <name>GTP</name>
        <dbReference type="ChEBI" id="CHEBI:37565"/>
    </ligand>
</feature>
<feature type="binding site" evidence="1">
    <location>
        <position position="355"/>
    </location>
    <ligand>
        <name>GTP</name>
        <dbReference type="ChEBI" id="CHEBI:37565"/>
    </ligand>
</feature>
<feature type="site" description="Essential for DHBP synthase activity" evidence="1">
    <location>
        <position position="124"/>
    </location>
</feature>
<feature type="site" description="Essential for DHBP synthase activity" evidence="1">
    <location>
        <position position="162"/>
    </location>
</feature>
<accession>C3P7P7</accession>
<organism>
    <name type="scientific">Bacillus anthracis (strain A0248)</name>
    <dbReference type="NCBI Taxonomy" id="592021"/>
    <lineage>
        <taxon>Bacteria</taxon>
        <taxon>Bacillati</taxon>
        <taxon>Bacillota</taxon>
        <taxon>Bacilli</taxon>
        <taxon>Bacillales</taxon>
        <taxon>Bacillaceae</taxon>
        <taxon>Bacillus</taxon>
        <taxon>Bacillus cereus group</taxon>
    </lineage>
</organism>
<keyword id="KW-0342">GTP-binding</keyword>
<keyword id="KW-0378">Hydrolase</keyword>
<keyword id="KW-0456">Lyase</keyword>
<keyword id="KW-0460">Magnesium</keyword>
<keyword id="KW-0464">Manganese</keyword>
<keyword id="KW-0479">Metal-binding</keyword>
<keyword id="KW-0511">Multifunctional enzyme</keyword>
<keyword id="KW-0547">Nucleotide-binding</keyword>
<keyword id="KW-0686">Riboflavin biosynthesis</keyword>
<keyword id="KW-0862">Zinc</keyword>
<protein>
    <recommendedName>
        <fullName evidence="1">Riboflavin biosynthesis protein RibBA</fullName>
    </recommendedName>
    <domain>
        <recommendedName>
            <fullName evidence="1">3,4-dihydroxy-2-butanone 4-phosphate synthase</fullName>
            <shortName evidence="1">DHBP synthase</shortName>
            <ecNumber evidence="1">4.1.99.12</ecNumber>
        </recommendedName>
    </domain>
    <domain>
        <recommendedName>
            <fullName evidence="1">GTP cyclohydrolase-2</fullName>
            <ecNumber evidence="1">3.5.4.25</ecNumber>
        </recommendedName>
        <alternativeName>
            <fullName evidence="1">GTP cyclohydrolase II</fullName>
        </alternativeName>
    </domain>
</protein>
<dbReference type="EC" id="4.1.99.12" evidence="1"/>
<dbReference type="EC" id="3.5.4.25" evidence="1"/>
<dbReference type="EMBL" id="CP001598">
    <property type="protein sequence ID" value="ACQ50353.1"/>
    <property type="molecule type" value="Genomic_DNA"/>
</dbReference>
<dbReference type="RefSeq" id="WP_000469013.1">
    <property type="nucleotide sequence ID" value="NC_012659.1"/>
</dbReference>
<dbReference type="SMR" id="C3P7P7"/>
<dbReference type="GeneID" id="45024000"/>
<dbReference type="KEGG" id="bai:BAA_4355"/>
<dbReference type="HOGENOM" id="CLU_020273_1_2_9"/>
<dbReference type="UniPathway" id="UPA00275">
    <property type="reaction ID" value="UER00399"/>
</dbReference>
<dbReference type="UniPathway" id="UPA00275">
    <property type="reaction ID" value="UER00400"/>
</dbReference>
<dbReference type="GO" id="GO:0005829">
    <property type="term" value="C:cytosol"/>
    <property type="evidence" value="ECO:0007669"/>
    <property type="project" value="TreeGrafter"/>
</dbReference>
<dbReference type="GO" id="GO:0008686">
    <property type="term" value="F:3,4-dihydroxy-2-butanone-4-phosphate synthase activity"/>
    <property type="evidence" value="ECO:0007669"/>
    <property type="project" value="UniProtKB-UniRule"/>
</dbReference>
<dbReference type="GO" id="GO:0005525">
    <property type="term" value="F:GTP binding"/>
    <property type="evidence" value="ECO:0007669"/>
    <property type="project" value="UniProtKB-KW"/>
</dbReference>
<dbReference type="GO" id="GO:0003935">
    <property type="term" value="F:GTP cyclohydrolase II activity"/>
    <property type="evidence" value="ECO:0007669"/>
    <property type="project" value="UniProtKB-UniRule"/>
</dbReference>
<dbReference type="GO" id="GO:0000287">
    <property type="term" value="F:magnesium ion binding"/>
    <property type="evidence" value="ECO:0007669"/>
    <property type="project" value="UniProtKB-UniRule"/>
</dbReference>
<dbReference type="GO" id="GO:0030145">
    <property type="term" value="F:manganese ion binding"/>
    <property type="evidence" value="ECO:0007669"/>
    <property type="project" value="UniProtKB-UniRule"/>
</dbReference>
<dbReference type="GO" id="GO:0008270">
    <property type="term" value="F:zinc ion binding"/>
    <property type="evidence" value="ECO:0007669"/>
    <property type="project" value="UniProtKB-UniRule"/>
</dbReference>
<dbReference type="GO" id="GO:0009231">
    <property type="term" value="P:riboflavin biosynthetic process"/>
    <property type="evidence" value="ECO:0007669"/>
    <property type="project" value="UniProtKB-UniRule"/>
</dbReference>
<dbReference type="CDD" id="cd00641">
    <property type="entry name" value="GTP_cyclohydro2"/>
    <property type="match status" value="1"/>
</dbReference>
<dbReference type="FunFam" id="3.40.50.10990:FF:000001">
    <property type="entry name" value="Riboflavin biosynthesis protein RibBA"/>
    <property type="match status" value="1"/>
</dbReference>
<dbReference type="FunFam" id="3.90.870.10:FF:000001">
    <property type="entry name" value="Riboflavin biosynthesis protein RibBA"/>
    <property type="match status" value="1"/>
</dbReference>
<dbReference type="Gene3D" id="3.90.870.10">
    <property type="entry name" value="DHBP synthase"/>
    <property type="match status" value="1"/>
</dbReference>
<dbReference type="Gene3D" id="3.40.50.10990">
    <property type="entry name" value="GTP cyclohydrolase II"/>
    <property type="match status" value="1"/>
</dbReference>
<dbReference type="HAMAP" id="MF_00179">
    <property type="entry name" value="RibA"/>
    <property type="match status" value="1"/>
</dbReference>
<dbReference type="HAMAP" id="MF_00180">
    <property type="entry name" value="RibB"/>
    <property type="match status" value="1"/>
</dbReference>
<dbReference type="HAMAP" id="MF_01283">
    <property type="entry name" value="RibBA"/>
    <property type="match status" value="1"/>
</dbReference>
<dbReference type="InterPro" id="IPR017945">
    <property type="entry name" value="DHBP_synth_RibB-like_a/b_dom"/>
</dbReference>
<dbReference type="InterPro" id="IPR000422">
    <property type="entry name" value="DHBP_synthase_RibB"/>
</dbReference>
<dbReference type="InterPro" id="IPR032677">
    <property type="entry name" value="GTP_cyclohydro_II"/>
</dbReference>
<dbReference type="InterPro" id="IPR000926">
    <property type="entry name" value="RibA"/>
</dbReference>
<dbReference type="InterPro" id="IPR036144">
    <property type="entry name" value="RibA-like_sf"/>
</dbReference>
<dbReference type="InterPro" id="IPR016299">
    <property type="entry name" value="Riboflavin_synth_RibBA"/>
</dbReference>
<dbReference type="NCBIfam" id="NF001591">
    <property type="entry name" value="PRK00393.1"/>
    <property type="match status" value="1"/>
</dbReference>
<dbReference type="NCBIfam" id="NF006803">
    <property type="entry name" value="PRK09311.1"/>
    <property type="match status" value="1"/>
</dbReference>
<dbReference type="NCBIfam" id="TIGR00505">
    <property type="entry name" value="ribA"/>
    <property type="match status" value="1"/>
</dbReference>
<dbReference type="NCBIfam" id="TIGR00506">
    <property type="entry name" value="ribB"/>
    <property type="match status" value="1"/>
</dbReference>
<dbReference type="PANTHER" id="PTHR21327:SF18">
    <property type="entry name" value="3,4-DIHYDROXY-2-BUTANONE 4-PHOSPHATE SYNTHASE"/>
    <property type="match status" value="1"/>
</dbReference>
<dbReference type="PANTHER" id="PTHR21327">
    <property type="entry name" value="GTP CYCLOHYDROLASE II-RELATED"/>
    <property type="match status" value="1"/>
</dbReference>
<dbReference type="Pfam" id="PF00926">
    <property type="entry name" value="DHBP_synthase"/>
    <property type="match status" value="1"/>
</dbReference>
<dbReference type="Pfam" id="PF00925">
    <property type="entry name" value="GTP_cyclohydro2"/>
    <property type="match status" value="1"/>
</dbReference>
<dbReference type="PIRSF" id="PIRSF001259">
    <property type="entry name" value="RibA"/>
    <property type="match status" value="1"/>
</dbReference>
<dbReference type="SUPFAM" id="SSF142695">
    <property type="entry name" value="RibA-like"/>
    <property type="match status" value="1"/>
</dbReference>
<dbReference type="SUPFAM" id="SSF55821">
    <property type="entry name" value="YrdC/RibB"/>
    <property type="match status" value="1"/>
</dbReference>
<gene>
    <name evidence="1" type="primary">ribBA</name>
    <name type="ordered locus">BAA_4355</name>
</gene>
<name>RIBBA_BACAA</name>
<sequence length="397" mass="43907">MFHRIEEALEDLKQGKVVIVCDDENRENEGDFIALAEYITPETINFMITHGRGLVCVPITEGYAERLQLEPMVSHNTDSHHTAFTVSIDHVSTTTGISAHERATTIQQLLNPASKGADFNRPGHIFPLIAKEGGVLRRAGHTEAAVDLAQLCGAEPAGVICEIINEDGTMARVPDLLQCAKQFDIKMITIEDLIAYRRHHETLVTREVEITLPTDFGTFQAIGYSNSLDTKEHIALVKGDISTGEPVLVRVHSECLTGDVFGSCRCDCGPQLHAALAQIEREGKGVLLYMRQEGRGIGLLNKLRAYKLQEEGFDTVEANEKLGFPADLRDYGIGAQILKDLGLQHLRLLTNNPRKIAGLQGYDLTVTERVPLQMPAKEENKTYLQTKVNKLGHLLNL</sequence>
<evidence type="ECO:0000255" key="1">
    <source>
        <dbReference type="HAMAP-Rule" id="MF_01283"/>
    </source>
</evidence>